<feature type="chain" id="PRO_1000139030" description="Acyl carrier protein">
    <location>
        <begin position="1"/>
        <end position="77"/>
    </location>
</feature>
<feature type="domain" description="Carrier" evidence="2">
    <location>
        <begin position="2"/>
        <end position="77"/>
    </location>
</feature>
<feature type="modified residue" description="O-(pantetheine 4'-phosphoryl)serine" evidence="2">
    <location>
        <position position="37"/>
    </location>
</feature>
<gene>
    <name evidence="1" type="primary">acpP</name>
    <name type="ordered locus">Glov_1935</name>
</gene>
<organism>
    <name type="scientific">Trichlorobacter lovleyi (strain ATCC BAA-1151 / DSM 17278 / SZ)</name>
    <name type="common">Geobacter lovleyi</name>
    <dbReference type="NCBI Taxonomy" id="398767"/>
    <lineage>
        <taxon>Bacteria</taxon>
        <taxon>Pseudomonadati</taxon>
        <taxon>Thermodesulfobacteriota</taxon>
        <taxon>Desulfuromonadia</taxon>
        <taxon>Geobacterales</taxon>
        <taxon>Geobacteraceae</taxon>
        <taxon>Trichlorobacter</taxon>
    </lineage>
</organism>
<dbReference type="EMBL" id="CP001089">
    <property type="protein sequence ID" value="ACD95651.1"/>
    <property type="molecule type" value="Genomic_DNA"/>
</dbReference>
<dbReference type="RefSeq" id="WP_012469990.1">
    <property type="nucleotide sequence ID" value="NC_010814.1"/>
</dbReference>
<dbReference type="SMR" id="B3E2J4"/>
<dbReference type="STRING" id="398767.Glov_1935"/>
<dbReference type="KEGG" id="glo:Glov_1935"/>
<dbReference type="eggNOG" id="COG0236">
    <property type="taxonomic scope" value="Bacteria"/>
</dbReference>
<dbReference type="HOGENOM" id="CLU_108696_5_1_7"/>
<dbReference type="OrthoDB" id="9804551at2"/>
<dbReference type="UniPathway" id="UPA00094"/>
<dbReference type="Proteomes" id="UP000002420">
    <property type="component" value="Chromosome"/>
</dbReference>
<dbReference type="GO" id="GO:0005829">
    <property type="term" value="C:cytosol"/>
    <property type="evidence" value="ECO:0007669"/>
    <property type="project" value="TreeGrafter"/>
</dbReference>
<dbReference type="GO" id="GO:0016020">
    <property type="term" value="C:membrane"/>
    <property type="evidence" value="ECO:0007669"/>
    <property type="project" value="GOC"/>
</dbReference>
<dbReference type="GO" id="GO:0000035">
    <property type="term" value="F:acyl binding"/>
    <property type="evidence" value="ECO:0007669"/>
    <property type="project" value="TreeGrafter"/>
</dbReference>
<dbReference type="GO" id="GO:0000036">
    <property type="term" value="F:acyl carrier activity"/>
    <property type="evidence" value="ECO:0007669"/>
    <property type="project" value="UniProtKB-UniRule"/>
</dbReference>
<dbReference type="GO" id="GO:0031177">
    <property type="term" value="F:phosphopantetheine binding"/>
    <property type="evidence" value="ECO:0007669"/>
    <property type="project" value="InterPro"/>
</dbReference>
<dbReference type="GO" id="GO:0009245">
    <property type="term" value="P:lipid A biosynthetic process"/>
    <property type="evidence" value="ECO:0007669"/>
    <property type="project" value="TreeGrafter"/>
</dbReference>
<dbReference type="FunFam" id="1.10.1200.10:FF:000001">
    <property type="entry name" value="Acyl carrier protein"/>
    <property type="match status" value="1"/>
</dbReference>
<dbReference type="Gene3D" id="1.10.1200.10">
    <property type="entry name" value="ACP-like"/>
    <property type="match status" value="1"/>
</dbReference>
<dbReference type="HAMAP" id="MF_01217">
    <property type="entry name" value="Acyl_carrier"/>
    <property type="match status" value="1"/>
</dbReference>
<dbReference type="InterPro" id="IPR003231">
    <property type="entry name" value="ACP"/>
</dbReference>
<dbReference type="InterPro" id="IPR036736">
    <property type="entry name" value="ACP-like_sf"/>
</dbReference>
<dbReference type="InterPro" id="IPR020806">
    <property type="entry name" value="PKS_PP-bd"/>
</dbReference>
<dbReference type="InterPro" id="IPR009081">
    <property type="entry name" value="PP-bd_ACP"/>
</dbReference>
<dbReference type="InterPro" id="IPR006162">
    <property type="entry name" value="Ppantetheine_attach_site"/>
</dbReference>
<dbReference type="NCBIfam" id="TIGR00517">
    <property type="entry name" value="acyl_carrier"/>
    <property type="match status" value="1"/>
</dbReference>
<dbReference type="NCBIfam" id="NF002148">
    <property type="entry name" value="PRK00982.1-2"/>
    <property type="match status" value="1"/>
</dbReference>
<dbReference type="NCBIfam" id="NF002149">
    <property type="entry name" value="PRK00982.1-3"/>
    <property type="match status" value="1"/>
</dbReference>
<dbReference type="NCBIfam" id="NF002150">
    <property type="entry name" value="PRK00982.1-4"/>
    <property type="match status" value="1"/>
</dbReference>
<dbReference type="NCBIfam" id="NF002151">
    <property type="entry name" value="PRK00982.1-5"/>
    <property type="match status" value="1"/>
</dbReference>
<dbReference type="PANTHER" id="PTHR20863">
    <property type="entry name" value="ACYL CARRIER PROTEIN"/>
    <property type="match status" value="1"/>
</dbReference>
<dbReference type="PANTHER" id="PTHR20863:SF76">
    <property type="entry name" value="CARRIER DOMAIN-CONTAINING PROTEIN"/>
    <property type="match status" value="1"/>
</dbReference>
<dbReference type="Pfam" id="PF00550">
    <property type="entry name" value="PP-binding"/>
    <property type="match status" value="1"/>
</dbReference>
<dbReference type="SMART" id="SM00823">
    <property type="entry name" value="PKS_PP"/>
    <property type="match status" value="1"/>
</dbReference>
<dbReference type="SUPFAM" id="SSF47336">
    <property type="entry name" value="ACP-like"/>
    <property type="match status" value="1"/>
</dbReference>
<dbReference type="PROSITE" id="PS50075">
    <property type="entry name" value="CARRIER"/>
    <property type="match status" value="1"/>
</dbReference>
<dbReference type="PROSITE" id="PS00012">
    <property type="entry name" value="PHOSPHOPANTETHEINE"/>
    <property type="match status" value="1"/>
</dbReference>
<proteinExistence type="inferred from homology"/>
<keyword id="KW-0963">Cytoplasm</keyword>
<keyword id="KW-0275">Fatty acid biosynthesis</keyword>
<keyword id="KW-0276">Fatty acid metabolism</keyword>
<keyword id="KW-0444">Lipid biosynthesis</keyword>
<keyword id="KW-0443">Lipid metabolism</keyword>
<keyword id="KW-0596">Phosphopantetheine</keyword>
<keyword id="KW-0597">Phosphoprotein</keyword>
<keyword id="KW-1185">Reference proteome</keyword>
<evidence type="ECO:0000255" key="1">
    <source>
        <dbReference type="HAMAP-Rule" id="MF_01217"/>
    </source>
</evidence>
<evidence type="ECO:0000255" key="2">
    <source>
        <dbReference type="PROSITE-ProRule" id="PRU00258"/>
    </source>
</evidence>
<sequence length="77" mass="8530">MSDVAKRVKEIIAEQLGVDEAQAVSEASFMDDLGADSLDTVELVMALEEEFDIEIPDEDAEKIQTVQDAIDYITEHT</sequence>
<accession>B3E2J4</accession>
<reference key="1">
    <citation type="submission" date="2008-05" db="EMBL/GenBank/DDBJ databases">
        <title>Complete sequence of chromosome of Geobacter lovleyi SZ.</title>
        <authorList>
            <consortium name="US DOE Joint Genome Institute"/>
            <person name="Lucas S."/>
            <person name="Copeland A."/>
            <person name="Lapidus A."/>
            <person name="Glavina del Rio T."/>
            <person name="Dalin E."/>
            <person name="Tice H."/>
            <person name="Bruce D."/>
            <person name="Goodwin L."/>
            <person name="Pitluck S."/>
            <person name="Chertkov O."/>
            <person name="Meincke L."/>
            <person name="Brettin T."/>
            <person name="Detter J.C."/>
            <person name="Han C."/>
            <person name="Tapia R."/>
            <person name="Kuske C.R."/>
            <person name="Schmutz J."/>
            <person name="Larimer F."/>
            <person name="Land M."/>
            <person name="Hauser L."/>
            <person name="Kyrpides N."/>
            <person name="Mikhailova N."/>
            <person name="Sung Y."/>
            <person name="Fletcher K.E."/>
            <person name="Ritalahti K.M."/>
            <person name="Loeffler F.E."/>
            <person name="Richardson P."/>
        </authorList>
    </citation>
    <scope>NUCLEOTIDE SEQUENCE [LARGE SCALE GENOMIC DNA]</scope>
    <source>
        <strain>ATCC BAA-1151 / DSM 17278 / SZ</strain>
    </source>
</reference>
<name>ACP_TRIL1</name>
<protein>
    <recommendedName>
        <fullName evidence="1">Acyl carrier protein</fullName>
        <shortName evidence="1">ACP</shortName>
    </recommendedName>
</protein>
<comment type="function">
    <text evidence="1">Carrier of the growing fatty acid chain in fatty acid biosynthesis.</text>
</comment>
<comment type="pathway">
    <text evidence="1">Lipid metabolism; fatty acid biosynthesis.</text>
</comment>
<comment type="subcellular location">
    <subcellularLocation>
        <location evidence="1">Cytoplasm</location>
    </subcellularLocation>
</comment>
<comment type="PTM">
    <text evidence="1">4'-phosphopantetheine is transferred from CoA to a specific serine of apo-ACP by AcpS. This modification is essential for activity because fatty acids are bound in thioester linkage to the sulfhydryl of the prosthetic group.</text>
</comment>
<comment type="similarity">
    <text evidence="1">Belongs to the acyl carrier protein (ACP) family.</text>
</comment>